<comment type="function">
    <text evidence="1">Negative regulator of class I heat shock genes (grpE-dnaK-dnaJ and groELS operons). Prevents heat-shock induction of these operons.</text>
</comment>
<comment type="similarity">
    <text evidence="1">Belongs to the HrcA family.</text>
</comment>
<evidence type="ECO:0000255" key="1">
    <source>
        <dbReference type="HAMAP-Rule" id="MF_00081"/>
    </source>
</evidence>
<gene>
    <name evidence="1" type="primary">hrcA</name>
    <name type="ordered locus">LBL_2646</name>
</gene>
<sequence>MDLTERHKRILKALVDEFIQENRPVGSKTLFDKHDIGLSPASIRTVLKDLEDYGYLASKHTSGGRIPTERGYRFYVDSLVILYELTLKEKQRIQQEYLKMQFKLDQILKATASVLSSLSNAAGIVIGPAKNLDTLKHLELIHVRGDEILMILVMRSGTVLHRNIFVDRNYSQEALYQVSKYLNDNLKGYDIYEIQNVVVPNLMVRRDGPEDFTRIAELLSSAMNPDNSEVTLYIDGFKNLYANFRDEEQQLSQVLSLLDDQGFLKEFFSEYIDQDGVYTIIGKDGNRSMSGVSIITSNYKMGEKKIGALGIIGPQRMDYNRALPLVDFTSKLVSEMVTRISK</sequence>
<name>HRCA_LEPBL</name>
<accession>Q04Y45</accession>
<feature type="chain" id="PRO_1000010418" description="Heat-inducible transcription repressor HrcA">
    <location>
        <begin position="1"/>
        <end position="342"/>
    </location>
</feature>
<protein>
    <recommendedName>
        <fullName evidence="1">Heat-inducible transcription repressor HrcA</fullName>
    </recommendedName>
</protein>
<dbReference type="EMBL" id="CP000348">
    <property type="protein sequence ID" value="ABJ80000.1"/>
    <property type="molecule type" value="Genomic_DNA"/>
</dbReference>
<dbReference type="RefSeq" id="WP_002754054.1">
    <property type="nucleotide sequence ID" value="NC_008508.1"/>
</dbReference>
<dbReference type="SMR" id="Q04Y45"/>
<dbReference type="KEGG" id="lbl:LBL_2646"/>
<dbReference type="HOGENOM" id="CLU_050019_1_0_12"/>
<dbReference type="GO" id="GO:0003677">
    <property type="term" value="F:DNA binding"/>
    <property type="evidence" value="ECO:0007669"/>
    <property type="project" value="InterPro"/>
</dbReference>
<dbReference type="GO" id="GO:0045892">
    <property type="term" value="P:negative regulation of DNA-templated transcription"/>
    <property type="evidence" value="ECO:0007669"/>
    <property type="project" value="UniProtKB-UniRule"/>
</dbReference>
<dbReference type="FunFam" id="1.10.10.10:FF:000450">
    <property type="entry name" value="Heat-inducible transcription repressor HrcA"/>
    <property type="match status" value="1"/>
</dbReference>
<dbReference type="Gene3D" id="3.30.450.40">
    <property type="match status" value="1"/>
</dbReference>
<dbReference type="Gene3D" id="3.30.390.60">
    <property type="entry name" value="Heat-inducible transcription repressor hrca homolog, domain 3"/>
    <property type="match status" value="1"/>
</dbReference>
<dbReference type="Gene3D" id="1.10.10.10">
    <property type="entry name" value="Winged helix-like DNA-binding domain superfamily/Winged helix DNA-binding domain"/>
    <property type="match status" value="1"/>
</dbReference>
<dbReference type="HAMAP" id="MF_00081">
    <property type="entry name" value="HrcA"/>
    <property type="match status" value="1"/>
</dbReference>
<dbReference type="InterPro" id="IPR029016">
    <property type="entry name" value="GAF-like_dom_sf"/>
</dbReference>
<dbReference type="InterPro" id="IPR002571">
    <property type="entry name" value="HrcA"/>
</dbReference>
<dbReference type="InterPro" id="IPR021153">
    <property type="entry name" value="HrcA_C"/>
</dbReference>
<dbReference type="InterPro" id="IPR036388">
    <property type="entry name" value="WH-like_DNA-bd_sf"/>
</dbReference>
<dbReference type="InterPro" id="IPR036390">
    <property type="entry name" value="WH_DNA-bd_sf"/>
</dbReference>
<dbReference type="InterPro" id="IPR023120">
    <property type="entry name" value="WHTH_transcript_rep_HrcA_IDD"/>
</dbReference>
<dbReference type="NCBIfam" id="TIGR00331">
    <property type="entry name" value="hrcA"/>
    <property type="match status" value="1"/>
</dbReference>
<dbReference type="PANTHER" id="PTHR34824">
    <property type="entry name" value="HEAT-INDUCIBLE TRANSCRIPTION REPRESSOR HRCA"/>
    <property type="match status" value="1"/>
</dbReference>
<dbReference type="PANTHER" id="PTHR34824:SF1">
    <property type="entry name" value="HEAT-INDUCIBLE TRANSCRIPTION REPRESSOR HRCA"/>
    <property type="match status" value="1"/>
</dbReference>
<dbReference type="Pfam" id="PF01628">
    <property type="entry name" value="HrcA"/>
    <property type="match status" value="1"/>
</dbReference>
<dbReference type="PIRSF" id="PIRSF005485">
    <property type="entry name" value="HrcA"/>
    <property type="match status" value="1"/>
</dbReference>
<dbReference type="SUPFAM" id="SSF55781">
    <property type="entry name" value="GAF domain-like"/>
    <property type="match status" value="1"/>
</dbReference>
<dbReference type="SUPFAM" id="SSF46785">
    <property type="entry name" value="Winged helix' DNA-binding domain"/>
    <property type="match status" value="1"/>
</dbReference>
<reference key="1">
    <citation type="journal article" date="2006" name="Proc. Natl. Acad. Sci. U.S.A.">
        <title>Genome reduction in Leptospira borgpetersenii reflects limited transmission potential.</title>
        <authorList>
            <person name="Bulach D.M."/>
            <person name="Zuerner R.L."/>
            <person name="Wilson P."/>
            <person name="Seemann T."/>
            <person name="McGrath A."/>
            <person name="Cullen P.A."/>
            <person name="Davis J."/>
            <person name="Johnson M."/>
            <person name="Kuczek E."/>
            <person name="Alt D.P."/>
            <person name="Peterson-Burch B."/>
            <person name="Coppel R.L."/>
            <person name="Rood J.I."/>
            <person name="Davies J.K."/>
            <person name="Adler B."/>
        </authorList>
    </citation>
    <scope>NUCLEOTIDE SEQUENCE [LARGE SCALE GENOMIC DNA]</scope>
    <source>
        <strain>L550</strain>
    </source>
</reference>
<keyword id="KW-0678">Repressor</keyword>
<keyword id="KW-0346">Stress response</keyword>
<keyword id="KW-0804">Transcription</keyword>
<keyword id="KW-0805">Transcription regulation</keyword>
<organism>
    <name type="scientific">Leptospira borgpetersenii serovar Hardjo-bovis (strain L550)</name>
    <dbReference type="NCBI Taxonomy" id="355276"/>
    <lineage>
        <taxon>Bacteria</taxon>
        <taxon>Pseudomonadati</taxon>
        <taxon>Spirochaetota</taxon>
        <taxon>Spirochaetia</taxon>
        <taxon>Leptospirales</taxon>
        <taxon>Leptospiraceae</taxon>
        <taxon>Leptospira</taxon>
    </lineage>
</organism>
<proteinExistence type="inferred from homology"/>